<feature type="chain" id="PRO_0000075590" description="2-C-methyl-D-erythritol 4-phosphate cytidylyltransferase">
    <location>
        <begin position="1"/>
        <end position="241"/>
    </location>
</feature>
<feature type="site" description="Transition state stabilizer" evidence="1">
    <location>
        <position position="20"/>
    </location>
</feature>
<feature type="site" description="Transition state stabilizer" evidence="1">
    <location>
        <position position="27"/>
    </location>
</feature>
<feature type="site" description="Positions MEP for the nucleophilic attack" evidence="1">
    <location>
        <position position="168"/>
    </location>
</feature>
<feature type="site" description="Positions MEP for the nucleophilic attack" evidence="1">
    <location>
        <position position="225"/>
    </location>
</feature>
<gene>
    <name evidence="1" type="primary">ispD</name>
    <name type="ordered locus">ML0321</name>
</gene>
<protein>
    <recommendedName>
        <fullName evidence="1">2-C-methyl-D-erythritol 4-phosphate cytidylyltransferase</fullName>
        <ecNumber evidence="1">2.7.7.60</ecNumber>
    </recommendedName>
    <alternativeName>
        <fullName evidence="1">4-diphosphocytidyl-2C-methyl-D-erythritol synthase</fullName>
    </alternativeName>
    <alternativeName>
        <fullName evidence="1">MEP cytidylyltransferase</fullName>
        <shortName evidence="1">MCT</shortName>
    </alternativeName>
</protein>
<dbReference type="EC" id="2.7.7.60" evidence="1"/>
<dbReference type="EMBL" id="AL583918">
    <property type="protein sequence ID" value="CAC29829.1"/>
    <property type="molecule type" value="Genomic_DNA"/>
</dbReference>
<dbReference type="PIR" id="A86949">
    <property type="entry name" value="A86949"/>
</dbReference>
<dbReference type="RefSeq" id="NP_301348.1">
    <property type="nucleotide sequence ID" value="NC_002677.1"/>
</dbReference>
<dbReference type="RefSeq" id="WP_010907672.1">
    <property type="nucleotide sequence ID" value="NC_002677.1"/>
</dbReference>
<dbReference type="SMR" id="Q9CCW6"/>
<dbReference type="STRING" id="272631.gene:17574140"/>
<dbReference type="KEGG" id="mle:ML0321"/>
<dbReference type="PATRIC" id="fig|272631.5.peg.519"/>
<dbReference type="Leproma" id="ML0321"/>
<dbReference type="eggNOG" id="COG1211">
    <property type="taxonomic scope" value="Bacteria"/>
</dbReference>
<dbReference type="HOGENOM" id="CLU_061281_1_1_11"/>
<dbReference type="OrthoDB" id="9802561at2"/>
<dbReference type="UniPathway" id="UPA00056">
    <property type="reaction ID" value="UER00093"/>
</dbReference>
<dbReference type="Proteomes" id="UP000000806">
    <property type="component" value="Chromosome"/>
</dbReference>
<dbReference type="GO" id="GO:0050518">
    <property type="term" value="F:2-C-methyl-D-erythritol 4-phosphate cytidylyltransferase activity"/>
    <property type="evidence" value="ECO:0007669"/>
    <property type="project" value="UniProtKB-UniRule"/>
</dbReference>
<dbReference type="GO" id="GO:0019288">
    <property type="term" value="P:isopentenyl diphosphate biosynthetic process, methylerythritol 4-phosphate pathway"/>
    <property type="evidence" value="ECO:0007669"/>
    <property type="project" value="UniProtKB-UniRule"/>
</dbReference>
<dbReference type="CDD" id="cd02516">
    <property type="entry name" value="CDP-ME_synthetase"/>
    <property type="match status" value="1"/>
</dbReference>
<dbReference type="FunFam" id="3.90.550.10:FF:000003">
    <property type="entry name" value="2-C-methyl-D-erythritol 4-phosphate cytidylyltransferase"/>
    <property type="match status" value="1"/>
</dbReference>
<dbReference type="Gene3D" id="3.90.550.10">
    <property type="entry name" value="Spore Coat Polysaccharide Biosynthesis Protein SpsA, Chain A"/>
    <property type="match status" value="1"/>
</dbReference>
<dbReference type="HAMAP" id="MF_00108">
    <property type="entry name" value="IspD"/>
    <property type="match status" value="1"/>
</dbReference>
<dbReference type="InterPro" id="IPR001228">
    <property type="entry name" value="IspD"/>
</dbReference>
<dbReference type="InterPro" id="IPR034683">
    <property type="entry name" value="IspD/TarI"/>
</dbReference>
<dbReference type="InterPro" id="IPR050088">
    <property type="entry name" value="IspD/TarI_cytidylyltransf_bact"/>
</dbReference>
<dbReference type="InterPro" id="IPR018294">
    <property type="entry name" value="ISPD_synthase_CS"/>
</dbReference>
<dbReference type="InterPro" id="IPR029044">
    <property type="entry name" value="Nucleotide-diphossugar_trans"/>
</dbReference>
<dbReference type="NCBIfam" id="TIGR00453">
    <property type="entry name" value="ispD"/>
    <property type="match status" value="1"/>
</dbReference>
<dbReference type="PANTHER" id="PTHR32125">
    <property type="entry name" value="2-C-METHYL-D-ERYTHRITOL 4-PHOSPHATE CYTIDYLYLTRANSFERASE, CHLOROPLASTIC"/>
    <property type="match status" value="1"/>
</dbReference>
<dbReference type="PANTHER" id="PTHR32125:SF4">
    <property type="entry name" value="2-C-METHYL-D-ERYTHRITOL 4-PHOSPHATE CYTIDYLYLTRANSFERASE, CHLOROPLASTIC"/>
    <property type="match status" value="1"/>
</dbReference>
<dbReference type="Pfam" id="PF01128">
    <property type="entry name" value="IspD"/>
    <property type="match status" value="1"/>
</dbReference>
<dbReference type="SUPFAM" id="SSF53448">
    <property type="entry name" value="Nucleotide-diphospho-sugar transferases"/>
    <property type="match status" value="1"/>
</dbReference>
<dbReference type="PROSITE" id="PS01295">
    <property type="entry name" value="ISPD"/>
    <property type="match status" value="1"/>
</dbReference>
<proteinExistence type="inferred from homology"/>
<sequence>MAVATGTVVAVVPAAGAGKRLAAGIPKAFCELDGRTLVERAVVGLLESGVVDHVVVAVPADRIAQTQWVLSQRLANSAGQHATVVAGGADRTKSVCQALATLPAPSRVGAPEFILVHDAARALTPARLIVRVVDALRAGHTAVVPALPLSDTIKAVDANGMVLGTPARVGLRAVQTPQGFATELLWCAYQRGPHLDAVDFTDDASLVEHLGGQVQVVAGDPLAFKITTQLDLLLAKKILRR</sequence>
<reference key="1">
    <citation type="journal article" date="2001" name="Nature">
        <title>Massive gene decay in the leprosy bacillus.</title>
        <authorList>
            <person name="Cole S.T."/>
            <person name="Eiglmeier K."/>
            <person name="Parkhill J."/>
            <person name="James K.D."/>
            <person name="Thomson N.R."/>
            <person name="Wheeler P.R."/>
            <person name="Honore N."/>
            <person name="Garnier T."/>
            <person name="Churcher C.M."/>
            <person name="Harris D.E."/>
            <person name="Mungall K.L."/>
            <person name="Basham D."/>
            <person name="Brown D."/>
            <person name="Chillingworth T."/>
            <person name="Connor R."/>
            <person name="Davies R.M."/>
            <person name="Devlin K."/>
            <person name="Duthoy S."/>
            <person name="Feltwell T."/>
            <person name="Fraser A."/>
            <person name="Hamlin N."/>
            <person name="Holroyd S."/>
            <person name="Hornsby T."/>
            <person name="Jagels K."/>
            <person name="Lacroix C."/>
            <person name="Maclean J."/>
            <person name="Moule S."/>
            <person name="Murphy L.D."/>
            <person name="Oliver K."/>
            <person name="Quail M.A."/>
            <person name="Rajandream M.A."/>
            <person name="Rutherford K.M."/>
            <person name="Rutter S."/>
            <person name="Seeger K."/>
            <person name="Simon S."/>
            <person name="Simmonds M."/>
            <person name="Skelton J."/>
            <person name="Squares R."/>
            <person name="Squares S."/>
            <person name="Stevens K."/>
            <person name="Taylor K."/>
            <person name="Whitehead S."/>
            <person name="Woodward J.R."/>
            <person name="Barrell B.G."/>
        </authorList>
    </citation>
    <scope>NUCLEOTIDE SEQUENCE [LARGE SCALE GENOMIC DNA]</scope>
    <source>
        <strain>TN</strain>
    </source>
</reference>
<comment type="function">
    <text evidence="1">Catalyzes the formation of 4-diphosphocytidyl-2-C-methyl-D-erythritol from CTP and 2-C-methyl-D-erythritol 4-phosphate (MEP).</text>
</comment>
<comment type="catalytic activity">
    <reaction evidence="1">
        <text>2-C-methyl-D-erythritol 4-phosphate + CTP + H(+) = 4-CDP-2-C-methyl-D-erythritol + diphosphate</text>
        <dbReference type="Rhea" id="RHEA:13429"/>
        <dbReference type="ChEBI" id="CHEBI:15378"/>
        <dbReference type="ChEBI" id="CHEBI:33019"/>
        <dbReference type="ChEBI" id="CHEBI:37563"/>
        <dbReference type="ChEBI" id="CHEBI:57823"/>
        <dbReference type="ChEBI" id="CHEBI:58262"/>
        <dbReference type="EC" id="2.7.7.60"/>
    </reaction>
</comment>
<comment type="pathway">
    <text evidence="1">Isoprenoid biosynthesis; isopentenyl diphosphate biosynthesis via DXP pathway; isopentenyl diphosphate from 1-deoxy-D-xylulose 5-phosphate: step 2/6.</text>
</comment>
<comment type="similarity">
    <text evidence="1">Belongs to the IspD/TarI cytidylyltransferase family. IspD subfamily.</text>
</comment>
<accession>Q9CCW6</accession>
<evidence type="ECO:0000255" key="1">
    <source>
        <dbReference type="HAMAP-Rule" id="MF_00108"/>
    </source>
</evidence>
<name>ISPD_MYCLE</name>
<keyword id="KW-0414">Isoprene biosynthesis</keyword>
<keyword id="KW-0548">Nucleotidyltransferase</keyword>
<keyword id="KW-1185">Reference proteome</keyword>
<keyword id="KW-0808">Transferase</keyword>
<organism>
    <name type="scientific">Mycobacterium leprae (strain TN)</name>
    <dbReference type="NCBI Taxonomy" id="272631"/>
    <lineage>
        <taxon>Bacteria</taxon>
        <taxon>Bacillati</taxon>
        <taxon>Actinomycetota</taxon>
        <taxon>Actinomycetes</taxon>
        <taxon>Mycobacteriales</taxon>
        <taxon>Mycobacteriaceae</taxon>
        <taxon>Mycobacterium</taxon>
    </lineage>
</organism>